<keyword id="KW-0687">Ribonucleoprotein</keyword>
<keyword id="KW-0689">Ribosomal protein</keyword>
<keyword id="KW-0694">RNA-binding</keyword>
<keyword id="KW-0699">rRNA-binding</keyword>
<reference key="1">
    <citation type="submission" date="2007-07" db="EMBL/GenBank/DDBJ databases">
        <title>Complete sequence of chromosome of Shewanella baltica OS185.</title>
        <authorList>
            <consortium name="US DOE Joint Genome Institute"/>
            <person name="Copeland A."/>
            <person name="Lucas S."/>
            <person name="Lapidus A."/>
            <person name="Barry K."/>
            <person name="Glavina del Rio T."/>
            <person name="Dalin E."/>
            <person name="Tice H."/>
            <person name="Pitluck S."/>
            <person name="Sims D."/>
            <person name="Brettin T."/>
            <person name="Bruce D."/>
            <person name="Detter J.C."/>
            <person name="Han C."/>
            <person name="Schmutz J."/>
            <person name="Larimer F."/>
            <person name="Land M."/>
            <person name="Hauser L."/>
            <person name="Kyrpides N."/>
            <person name="Mikhailova N."/>
            <person name="Brettar I."/>
            <person name="Rodrigues J."/>
            <person name="Konstantinidis K."/>
            <person name="Tiedje J."/>
            <person name="Richardson P."/>
        </authorList>
    </citation>
    <scope>NUCLEOTIDE SEQUENCE [LARGE SCALE GENOMIC DNA]</scope>
    <source>
        <strain>OS185</strain>
    </source>
</reference>
<dbReference type="EMBL" id="CP000753">
    <property type="protein sequence ID" value="ABS06376.1"/>
    <property type="molecule type" value="Genomic_DNA"/>
</dbReference>
<dbReference type="RefSeq" id="WP_006083591.1">
    <property type="nucleotide sequence ID" value="NC_009665.1"/>
</dbReference>
<dbReference type="SMR" id="A6WHT7"/>
<dbReference type="GeneID" id="67441769"/>
<dbReference type="KEGG" id="sbm:Shew185_0205"/>
<dbReference type="HOGENOM" id="CLU_073626_1_1_6"/>
<dbReference type="GO" id="GO:0022627">
    <property type="term" value="C:cytosolic small ribosomal subunit"/>
    <property type="evidence" value="ECO:0007669"/>
    <property type="project" value="TreeGrafter"/>
</dbReference>
<dbReference type="GO" id="GO:0019843">
    <property type="term" value="F:rRNA binding"/>
    <property type="evidence" value="ECO:0007669"/>
    <property type="project" value="UniProtKB-UniRule"/>
</dbReference>
<dbReference type="GO" id="GO:0003735">
    <property type="term" value="F:structural constituent of ribosome"/>
    <property type="evidence" value="ECO:0007669"/>
    <property type="project" value="InterPro"/>
</dbReference>
<dbReference type="GO" id="GO:0006412">
    <property type="term" value="P:translation"/>
    <property type="evidence" value="ECO:0007669"/>
    <property type="project" value="UniProtKB-UniRule"/>
</dbReference>
<dbReference type="CDD" id="cd00364">
    <property type="entry name" value="Ribosomal_uS17"/>
    <property type="match status" value="1"/>
</dbReference>
<dbReference type="FunFam" id="2.40.50.140:FF:000014">
    <property type="entry name" value="30S ribosomal protein S17"/>
    <property type="match status" value="1"/>
</dbReference>
<dbReference type="Gene3D" id="2.40.50.140">
    <property type="entry name" value="Nucleic acid-binding proteins"/>
    <property type="match status" value="1"/>
</dbReference>
<dbReference type="HAMAP" id="MF_01345_B">
    <property type="entry name" value="Ribosomal_uS17_B"/>
    <property type="match status" value="1"/>
</dbReference>
<dbReference type="InterPro" id="IPR012340">
    <property type="entry name" value="NA-bd_OB-fold"/>
</dbReference>
<dbReference type="InterPro" id="IPR000266">
    <property type="entry name" value="Ribosomal_uS17"/>
</dbReference>
<dbReference type="InterPro" id="IPR019984">
    <property type="entry name" value="Ribosomal_uS17_bact/chlr"/>
</dbReference>
<dbReference type="InterPro" id="IPR019979">
    <property type="entry name" value="Ribosomal_uS17_CS"/>
</dbReference>
<dbReference type="NCBIfam" id="NF004123">
    <property type="entry name" value="PRK05610.1"/>
    <property type="match status" value="1"/>
</dbReference>
<dbReference type="NCBIfam" id="TIGR03635">
    <property type="entry name" value="uS17_bact"/>
    <property type="match status" value="1"/>
</dbReference>
<dbReference type="PANTHER" id="PTHR10744">
    <property type="entry name" value="40S RIBOSOMAL PROTEIN S11 FAMILY MEMBER"/>
    <property type="match status" value="1"/>
</dbReference>
<dbReference type="PANTHER" id="PTHR10744:SF1">
    <property type="entry name" value="SMALL RIBOSOMAL SUBUNIT PROTEIN US17M"/>
    <property type="match status" value="1"/>
</dbReference>
<dbReference type="Pfam" id="PF00366">
    <property type="entry name" value="Ribosomal_S17"/>
    <property type="match status" value="1"/>
</dbReference>
<dbReference type="PRINTS" id="PR00973">
    <property type="entry name" value="RIBOSOMALS17"/>
</dbReference>
<dbReference type="SUPFAM" id="SSF50249">
    <property type="entry name" value="Nucleic acid-binding proteins"/>
    <property type="match status" value="1"/>
</dbReference>
<dbReference type="PROSITE" id="PS00056">
    <property type="entry name" value="RIBOSOMAL_S17"/>
    <property type="match status" value="1"/>
</dbReference>
<sequence length="82" mass="9382">MSDKIRTLQGRVTSNKMDKSITVAIERQVKHPIYGKYIKRTTKIHAHDETNQCNEGDLVAIRECRPLSKTKSWTLVEVVSKA</sequence>
<organism>
    <name type="scientific">Shewanella baltica (strain OS185)</name>
    <dbReference type="NCBI Taxonomy" id="402882"/>
    <lineage>
        <taxon>Bacteria</taxon>
        <taxon>Pseudomonadati</taxon>
        <taxon>Pseudomonadota</taxon>
        <taxon>Gammaproteobacteria</taxon>
        <taxon>Alteromonadales</taxon>
        <taxon>Shewanellaceae</taxon>
        <taxon>Shewanella</taxon>
    </lineage>
</organism>
<name>RS17_SHEB8</name>
<feature type="chain" id="PRO_1000055017" description="Small ribosomal subunit protein uS17">
    <location>
        <begin position="1"/>
        <end position="82"/>
    </location>
</feature>
<evidence type="ECO:0000255" key="1">
    <source>
        <dbReference type="HAMAP-Rule" id="MF_01345"/>
    </source>
</evidence>
<evidence type="ECO:0000305" key="2"/>
<gene>
    <name evidence="1" type="primary">rpsQ</name>
    <name type="ordered locus">Shew185_0205</name>
</gene>
<accession>A6WHT7</accession>
<protein>
    <recommendedName>
        <fullName evidence="1">Small ribosomal subunit protein uS17</fullName>
    </recommendedName>
    <alternativeName>
        <fullName evidence="2">30S ribosomal protein S17</fullName>
    </alternativeName>
</protein>
<comment type="function">
    <text evidence="1">One of the primary rRNA binding proteins, it binds specifically to the 5'-end of 16S ribosomal RNA.</text>
</comment>
<comment type="subunit">
    <text evidence="1">Part of the 30S ribosomal subunit.</text>
</comment>
<comment type="similarity">
    <text evidence="1">Belongs to the universal ribosomal protein uS17 family.</text>
</comment>
<proteinExistence type="inferred from homology"/>